<accession>A0KNV5</accession>
<gene>
    <name evidence="1" type="primary">trmB</name>
    <name type="ordered locus">AHA_3482</name>
</gene>
<name>TRMB_AERHH</name>
<sequence length="237" mass="26734">MPVTQDVFNEDGKFMRKIRSFVRREGRLTKGQEKALEELWPVMGIDFAPEPLDLVALFGREAPVVLEIGFGMGASLVEMAKNAPEKNFIGIEVHSPGVGACLGTAQEAGVTNLRVICHDAVEVLEHMIPNGSLACLQLFFPDPWHKSRHHKRRIVQPAFVQDIRQKLAIGGVFHMATDWENYAEHMLEVMSAAEGYENTSATGNWVPRPDWRPLTKFEQRGHRLGHGVWDLIFKRVN</sequence>
<protein>
    <recommendedName>
        <fullName evidence="1">tRNA (guanine-N(7)-)-methyltransferase</fullName>
        <ecNumber evidence="1">2.1.1.33</ecNumber>
    </recommendedName>
    <alternativeName>
        <fullName evidence="1">tRNA (guanine(46)-N(7))-methyltransferase</fullName>
    </alternativeName>
    <alternativeName>
        <fullName evidence="1">tRNA(m7G46)-methyltransferase</fullName>
    </alternativeName>
</protein>
<keyword id="KW-0489">Methyltransferase</keyword>
<keyword id="KW-1185">Reference proteome</keyword>
<keyword id="KW-0949">S-adenosyl-L-methionine</keyword>
<keyword id="KW-0808">Transferase</keyword>
<keyword id="KW-0819">tRNA processing</keyword>
<evidence type="ECO:0000255" key="1">
    <source>
        <dbReference type="HAMAP-Rule" id="MF_01057"/>
    </source>
</evidence>
<evidence type="ECO:0000255" key="2">
    <source>
        <dbReference type="PROSITE-ProRule" id="PRU00957"/>
    </source>
</evidence>
<evidence type="ECO:0000305" key="3"/>
<feature type="chain" id="PRO_0000288114" description="tRNA (guanine-N(7)-)-methyltransferase">
    <location>
        <begin position="1"/>
        <end position="237"/>
    </location>
</feature>
<feature type="active site" evidence="2">
    <location>
        <position position="142"/>
    </location>
</feature>
<feature type="binding site" evidence="1">
    <location>
        <position position="67"/>
    </location>
    <ligand>
        <name>S-adenosyl-L-methionine</name>
        <dbReference type="ChEBI" id="CHEBI:59789"/>
    </ligand>
</feature>
<feature type="binding site" evidence="1">
    <location>
        <position position="92"/>
    </location>
    <ligand>
        <name>S-adenosyl-L-methionine</name>
        <dbReference type="ChEBI" id="CHEBI:59789"/>
    </ligand>
</feature>
<feature type="binding site" evidence="1">
    <location>
        <position position="119"/>
    </location>
    <ligand>
        <name>S-adenosyl-L-methionine</name>
        <dbReference type="ChEBI" id="CHEBI:59789"/>
    </ligand>
</feature>
<feature type="binding site" evidence="1">
    <location>
        <position position="142"/>
    </location>
    <ligand>
        <name>S-adenosyl-L-methionine</name>
        <dbReference type="ChEBI" id="CHEBI:59789"/>
    </ligand>
</feature>
<feature type="binding site" evidence="1">
    <location>
        <position position="146"/>
    </location>
    <ligand>
        <name>substrate</name>
    </ligand>
</feature>
<feature type="binding site" evidence="1">
    <location>
        <position position="178"/>
    </location>
    <ligand>
        <name>substrate</name>
    </ligand>
</feature>
<feature type="binding site" evidence="1">
    <location>
        <begin position="215"/>
        <end position="218"/>
    </location>
    <ligand>
        <name>substrate</name>
    </ligand>
</feature>
<comment type="function">
    <text evidence="1">Catalyzes the formation of N(7)-methylguanine at position 46 (m7G46) in tRNA.</text>
</comment>
<comment type="catalytic activity">
    <reaction evidence="1">
        <text>guanosine(46) in tRNA + S-adenosyl-L-methionine = N(7)-methylguanosine(46) in tRNA + S-adenosyl-L-homocysteine</text>
        <dbReference type="Rhea" id="RHEA:42708"/>
        <dbReference type="Rhea" id="RHEA-COMP:10188"/>
        <dbReference type="Rhea" id="RHEA-COMP:10189"/>
        <dbReference type="ChEBI" id="CHEBI:57856"/>
        <dbReference type="ChEBI" id="CHEBI:59789"/>
        <dbReference type="ChEBI" id="CHEBI:74269"/>
        <dbReference type="ChEBI" id="CHEBI:74480"/>
        <dbReference type="EC" id="2.1.1.33"/>
    </reaction>
</comment>
<comment type="pathway">
    <text evidence="1">tRNA modification; N(7)-methylguanine-tRNA biosynthesis.</text>
</comment>
<comment type="similarity">
    <text evidence="1">Belongs to the class I-like SAM-binding methyltransferase superfamily. TrmB family.</text>
</comment>
<comment type="sequence caution" evidence="3">
    <conflict type="erroneous initiation">
        <sequence resource="EMBL-CDS" id="ABK37533"/>
    </conflict>
    <text>Truncated N-terminus.</text>
</comment>
<proteinExistence type="inferred from homology"/>
<dbReference type="EC" id="2.1.1.33" evidence="1"/>
<dbReference type="EMBL" id="CP000462">
    <property type="protein sequence ID" value="ABK37533.1"/>
    <property type="status" value="ALT_INIT"/>
    <property type="molecule type" value="Genomic_DNA"/>
</dbReference>
<dbReference type="RefSeq" id="WP_164927735.1">
    <property type="nucleotide sequence ID" value="NC_008570.1"/>
</dbReference>
<dbReference type="RefSeq" id="YP_857956.1">
    <property type="nucleotide sequence ID" value="NC_008570.1"/>
</dbReference>
<dbReference type="SMR" id="A0KNV5"/>
<dbReference type="STRING" id="380703.AHA_3482"/>
<dbReference type="EnsemblBacteria" id="ABK37533">
    <property type="protein sequence ID" value="ABK37533"/>
    <property type="gene ID" value="AHA_3482"/>
</dbReference>
<dbReference type="GeneID" id="4487817"/>
<dbReference type="KEGG" id="aha:AHA_3482"/>
<dbReference type="PATRIC" id="fig|380703.7.peg.3470"/>
<dbReference type="eggNOG" id="COG0220">
    <property type="taxonomic scope" value="Bacteria"/>
</dbReference>
<dbReference type="HOGENOM" id="CLU_050910_0_1_6"/>
<dbReference type="OrthoDB" id="9802090at2"/>
<dbReference type="UniPathway" id="UPA00989"/>
<dbReference type="Proteomes" id="UP000000756">
    <property type="component" value="Chromosome"/>
</dbReference>
<dbReference type="GO" id="GO:0043527">
    <property type="term" value="C:tRNA methyltransferase complex"/>
    <property type="evidence" value="ECO:0007669"/>
    <property type="project" value="TreeGrafter"/>
</dbReference>
<dbReference type="GO" id="GO:0008176">
    <property type="term" value="F:tRNA (guanine(46)-N7)-methyltransferase activity"/>
    <property type="evidence" value="ECO:0007669"/>
    <property type="project" value="UniProtKB-UniRule"/>
</dbReference>
<dbReference type="CDD" id="cd02440">
    <property type="entry name" value="AdoMet_MTases"/>
    <property type="match status" value="1"/>
</dbReference>
<dbReference type="FunFam" id="3.40.50.150:FF:000024">
    <property type="entry name" value="tRNA (guanine-N(7)-)-methyltransferase"/>
    <property type="match status" value="1"/>
</dbReference>
<dbReference type="Gene3D" id="3.40.50.150">
    <property type="entry name" value="Vaccinia Virus protein VP39"/>
    <property type="match status" value="1"/>
</dbReference>
<dbReference type="HAMAP" id="MF_01057">
    <property type="entry name" value="tRNA_methyltr_TrmB"/>
    <property type="match status" value="1"/>
</dbReference>
<dbReference type="InterPro" id="IPR029063">
    <property type="entry name" value="SAM-dependent_MTases_sf"/>
</dbReference>
<dbReference type="InterPro" id="IPR003358">
    <property type="entry name" value="tRNA_(Gua-N-7)_MeTrfase_Trmb"/>
</dbReference>
<dbReference type="InterPro" id="IPR055361">
    <property type="entry name" value="tRNA_methyltr_TrmB_bact"/>
</dbReference>
<dbReference type="NCBIfam" id="TIGR00091">
    <property type="entry name" value="tRNA (guanosine(46)-N7)-methyltransferase TrmB"/>
    <property type="match status" value="1"/>
</dbReference>
<dbReference type="PANTHER" id="PTHR23417">
    <property type="entry name" value="3-DEOXY-D-MANNO-OCTULOSONIC-ACID TRANSFERASE/TRNA GUANINE-N 7 - -METHYLTRANSFERASE"/>
    <property type="match status" value="1"/>
</dbReference>
<dbReference type="PANTHER" id="PTHR23417:SF14">
    <property type="entry name" value="PENTACOTRIPEPTIDE-REPEAT REGION OF PRORP DOMAIN-CONTAINING PROTEIN"/>
    <property type="match status" value="1"/>
</dbReference>
<dbReference type="Pfam" id="PF02390">
    <property type="entry name" value="Methyltransf_4"/>
    <property type="match status" value="1"/>
</dbReference>
<dbReference type="SUPFAM" id="SSF53335">
    <property type="entry name" value="S-adenosyl-L-methionine-dependent methyltransferases"/>
    <property type="match status" value="1"/>
</dbReference>
<dbReference type="PROSITE" id="PS51625">
    <property type="entry name" value="SAM_MT_TRMB"/>
    <property type="match status" value="1"/>
</dbReference>
<reference key="1">
    <citation type="journal article" date="2006" name="J. Bacteriol.">
        <title>Genome sequence of Aeromonas hydrophila ATCC 7966T: jack of all trades.</title>
        <authorList>
            <person name="Seshadri R."/>
            <person name="Joseph S.W."/>
            <person name="Chopra A.K."/>
            <person name="Sha J."/>
            <person name="Shaw J."/>
            <person name="Graf J."/>
            <person name="Haft D.H."/>
            <person name="Wu M."/>
            <person name="Ren Q."/>
            <person name="Rosovitz M.J."/>
            <person name="Madupu R."/>
            <person name="Tallon L."/>
            <person name="Kim M."/>
            <person name="Jin S."/>
            <person name="Vuong H."/>
            <person name="Stine O.C."/>
            <person name="Ali A."/>
            <person name="Horneman A.J."/>
            <person name="Heidelberg J.F."/>
        </authorList>
    </citation>
    <scope>NUCLEOTIDE SEQUENCE [LARGE SCALE GENOMIC DNA]</scope>
    <source>
        <strain>ATCC 7966 / DSM 30187 / BCRC 13018 / CCUG 14551 / JCM 1027 / KCTC 2358 / NCIMB 9240 / NCTC 8049</strain>
    </source>
</reference>
<organism>
    <name type="scientific">Aeromonas hydrophila subsp. hydrophila (strain ATCC 7966 / DSM 30187 / BCRC 13018 / CCUG 14551 / JCM 1027 / KCTC 2358 / NCIMB 9240 / NCTC 8049)</name>
    <dbReference type="NCBI Taxonomy" id="380703"/>
    <lineage>
        <taxon>Bacteria</taxon>
        <taxon>Pseudomonadati</taxon>
        <taxon>Pseudomonadota</taxon>
        <taxon>Gammaproteobacteria</taxon>
        <taxon>Aeromonadales</taxon>
        <taxon>Aeromonadaceae</taxon>
        <taxon>Aeromonas</taxon>
    </lineage>
</organism>